<proteinExistence type="inferred from homology"/>
<gene>
    <name evidence="1" type="primary">accA</name>
    <name type="ordered locus">SeSA_A0258</name>
</gene>
<name>ACCA_SALSV</name>
<evidence type="ECO:0000255" key="1">
    <source>
        <dbReference type="HAMAP-Rule" id="MF_00823"/>
    </source>
</evidence>
<evidence type="ECO:0000255" key="2">
    <source>
        <dbReference type="PROSITE-ProRule" id="PRU01137"/>
    </source>
</evidence>
<accession>B4TYE5</accession>
<protein>
    <recommendedName>
        <fullName evidence="1">Acetyl-coenzyme A carboxylase carboxyl transferase subunit alpha</fullName>
        <shortName evidence="1">ACCase subunit alpha</shortName>
        <shortName evidence="1">Acetyl-CoA carboxylase carboxyltransferase subunit alpha</shortName>
        <ecNumber evidence="1">2.1.3.15</ecNumber>
    </recommendedName>
</protein>
<keyword id="KW-0067">ATP-binding</keyword>
<keyword id="KW-0963">Cytoplasm</keyword>
<keyword id="KW-0275">Fatty acid biosynthesis</keyword>
<keyword id="KW-0276">Fatty acid metabolism</keyword>
<keyword id="KW-0444">Lipid biosynthesis</keyword>
<keyword id="KW-0443">Lipid metabolism</keyword>
<keyword id="KW-0547">Nucleotide-binding</keyword>
<keyword id="KW-0808">Transferase</keyword>
<organism>
    <name type="scientific">Salmonella schwarzengrund (strain CVM19633)</name>
    <dbReference type="NCBI Taxonomy" id="439843"/>
    <lineage>
        <taxon>Bacteria</taxon>
        <taxon>Pseudomonadati</taxon>
        <taxon>Pseudomonadota</taxon>
        <taxon>Gammaproteobacteria</taxon>
        <taxon>Enterobacterales</taxon>
        <taxon>Enterobacteriaceae</taxon>
        <taxon>Salmonella</taxon>
    </lineage>
</organism>
<feature type="chain" id="PRO_1000134521" description="Acetyl-coenzyme A carboxylase carboxyl transferase subunit alpha">
    <location>
        <begin position="1"/>
        <end position="319"/>
    </location>
</feature>
<feature type="domain" description="CoA carboxyltransferase C-terminal" evidence="2">
    <location>
        <begin position="35"/>
        <end position="296"/>
    </location>
</feature>
<sequence length="319" mass="35344">MSLNFLDFEQPIAELEAKIDSLTAVSRQDEKLDINIDEEVHRLREKSVELTRKIFADLGAWQVAQLARHPQRPYTLDYVRLAFDEFDELAGDRAYADDKAIVGGIARLEGRPVMIIGHQKGRETKEKIRRNFGMPAPEGYRKALRLMEMAERFNMPIITFIDTPGAYPGVGAEERGQSEAIARNLREMSRLNVPVICTVIGEGGSGGALAIGVGDKVNMLQYSTYSVISPEGCASILWKSADKAPLAAEAMGIIAPRLKELKLIDSIIPEPLGGAHRNPEAMAASLKAQLLEDLADLDVLSTDDLKNRRYQRLMSYGYA</sequence>
<dbReference type="EC" id="2.1.3.15" evidence="1"/>
<dbReference type="EMBL" id="CP001127">
    <property type="protein sequence ID" value="ACF90408.1"/>
    <property type="molecule type" value="Genomic_DNA"/>
</dbReference>
<dbReference type="RefSeq" id="WP_000055753.1">
    <property type="nucleotide sequence ID" value="NC_011094.1"/>
</dbReference>
<dbReference type="SMR" id="B4TYE5"/>
<dbReference type="KEGG" id="sew:SeSA_A0258"/>
<dbReference type="HOGENOM" id="CLU_015486_0_2_6"/>
<dbReference type="UniPathway" id="UPA00655">
    <property type="reaction ID" value="UER00711"/>
</dbReference>
<dbReference type="Proteomes" id="UP000001865">
    <property type="component" value="Chromosome"/>
</dbReference>
<dbReference type="GO" id="GO:0009317">
    <property type="term" value="C:acetyl-CoA carboxylase complex"/>
    <property type="evidence" value="ECO:0007669"/>
    <property type="project" value="InterPro"/>
</dbReference>
<dbReference type="GO" id="GO:0003989">
    <property type="term" value="F:acetyl-CoA carboxylase activity"/>
    <property type="evidence" value="ECO:0007669"/>
    <property type="project" value="InterPro"/>
</dbReference>
<dbReference type="GO" id="GO:0005524">
    <property type="term" value="F:ATP binding"/>
    <property type="evidence" value="ECO:0007669"/>
    <property type="project" value="UniProtKB-KW"/>
</dbReference>
<dbReference type="GO" id="GO:0016743">
    <property type="term" value="F:carboxyl- or carbamoyltransferase activity"/>
    <property type="evidence" value="ECO:0007669"/>
    <property type="project" value="UniProtKB-UniRule"/>
</dbReference>
<dbReference type="GO" id="GO:0006633">
    <property type="term" value="P:fatty acid biosynthetic process"/>
    <property type="evidence" value="ECO:0007669"/>
    <property type="project" value="UniProtKB-KW"/>
</dbReference>
<dbReference type="GO" id="GO:2001295">
    <property type="term" value="P:malonyl-CoA biosynthetic process"/>
    <property type="evidence" value="ECO:0007669"/>
    <property type="project" value="UniProtKB-UniRule"/>
</dbReference>
<dbReference type="FunFam" id="3.90.226.10:FF:000008">
    <property type="entry name" value="Acetyl-coenzyme A carboxylase carboxyl transferase subunit alpha"/>
    <property type="match status" value="1"/>
</dbReference>
<dbReference type="Gene3D" id="3.90.226.10">
    <property type="entry name" value="2-enoyl-CoA Hydratase, Chain A, domain 1"/>
    <property type="match status" value="1"/>
</dbReference>
<dbReference type="HAMAP" id="MF_00823">
    <property type="entry name" value="AcetylCoA_CT_alpha"/>
    <property type="match status" value="1"/>
</dbReference>
<dbReference type="InterPro" id="IPR001095">
    <property type="entry name" value="Acetyl_CoA_COase_a_su"/>
</dbReference>
<dbReference type="InterPro" id="IPR029045">
    <property type="entry name" value="ClpP/crotonase-like_dom_sf"/>
</dbReference>
<dbReference type="InterPro" id="IPR011763">
    <property type="entry name" value="COA_CT_C"/>
</dbReference>
<dbReference type="NCBIfam" id="TIGR00513">
    <property type="entry name" value="accA"/>
    <property type="match status" value="1"/>
</dbReference>
<dbReference type="NCBIfam" id="NF041504">
    <property type="entry name" value="AccA_sub"/>
    <property type="match status" value="1"/>
</dbReference>
<dbReference type="NCBIfam" id="NF004344">
    <property type="entry name" value="PRK05724.1"/>
    <property type="match status" value="1"/>
</dbReference>
<dbReference type="PANTHER" id="PTHR42853">
    <property type="entry name" value="ACETYL-COENZYME A CARBOXYLASE CARBOXYL TRANSFERASE SUBUNIT ALPHA"/>
    <property type="match status" value="1"/>
</dbReference>
<dbReference type="PANTHER" id="PTHR42853:SF3">
    <property type="entry name" value="ACETYL-COENZYME A CARBOXYLASE CARBOXYL TRANSFERASE SUBUNIT ALPHA, CHLOROPLASTIC"/>
    <property type="match status" value="1"/>
</dbReference>
<dbReference type="Pfam" id="PF03255">
    <property type="entry name" value="ACCA"/>
    <property type="match status" value="1"/>
</dbReference>
<dbReference type="PRINTS" id="PR01069">
    <property type="entry name" value="ACCCTRFRASEA"/>
</dbReference>
<dbReference type="SUPFAM" id="SSF52096">
    <property type="entry name" value="ClpP/crotonase"/>
    <property type="match status" value="1"/>
</dbReference>
<dbReference type="PROSITE" id="PS50989">
    <property type="entry name" value="COA_CT_CTER"/>
    <property type="match status" value="1"/>
</dbReference>
<comment type="function">
    <text evidence="1">Component of the acetyl coenzyme A carboxylase (ACC) complex. First, biotin carboxylase catalyzes the carboxylation of biotin on its carrier protein (BCCP) and then the CO(2) group is transferred by the carboxyltransferase to acetyl-CoA to form malonyl-CoA.</text>
</comment>
<comment type="catalytic activity">
    <reaction evidence="1">
        <text>N(6)-carboxybiotinyl-L-lysyl-[protein] + acetyl-CoA = N(6)-biotinyl-L-lysyl-[protein] + malonyl-CoA</text>
        <dbReference type="Rhea" id="RHEA:54728"/>
        <dbReference type="Rhea" id="RHEA-COMP:10505"/>
        <dbReference type="Rhea" id="RHEA-COMP:10506"/>
        <dbReference type="ChEBI" id="CHEBI:57288"/>
        <dbReference type="ChEBI" id="CHEBI:57384"/>
        <dbReference type="ChEBI" id="CHEBI:83144"/>
        <dbReference type="ChEBI" id="CHEBI:83145"/>
        <dbReference type="EC" id="2.1.3.15"/>
    </reaction>
</comment>
<comment type="pathway">
    <text evidence="1">Lipid metabolism; malonyl-CoA biosynthesis; malonyl-CoA from acetyl-CoA: step 1/1.</text>
</comment>
<comment type="subunit">
    <text evidence="1">Acetyl-CoA carboxylase is a heterohexamer composed of biotin carboxyl carrier protein (AccB), biotin carboxylase (AccC) and two subunits each of ACCase subunit alpha (AccA) and ACCase subunit beta (AccD).</text>
</comment>
<comment type="subcellular location">
    <subcellularLocation>
        <location evidence="1">Cytoplasm</location>
    </subcellularLocation>
</comment>
<comment type="similarity">
    <text evidence="1">Belongs to the AccA family.</text>
</comment>
<reference key="1">
    <citation type="journal article" date="2011" name="J. Bacteriol.">
        <title>Comparative genomics of 28 Salmonella enterica isolates: evidence for CRISPR-mediated adaptive sublineage evolution.</title>
        <authorList>
            <person name="Fricke W.F."/>
            <person name="Mammel M.K."/>
            <person name="McDermott P.F."/>
            <person name="Tartera C."/>
            <person name="White D.G."/>
            <person name="Leclerc J.E."/>
            <person name="Ravel J."/>
            <person name="Cebula T.A."/>
        </authorList>
    </citation>
    <scope>NUCLEOTIDE SEQUENCE [LARGE SCALE GENOMIC DNA]</scope>
    <source>
        <strain>CVM19633</strain>
    </source>
</reference>